<proteinExistence type="inferred from homology"/>
<accession>Q1MQE1</accession>
<comment type="function">
    <text evidence="1">Protease subunit of a proteasome-like degradation complex believed to be a general protein degrading machinery.</text>
</comment>
<comment type="catalytic activity">
    <reaction evidence="1">
        <text>ATP-dependent cleavage of peptide bonds with broad specificity.</text>
        <dbReference type="EC" id="3.4.25.2"/>
    </reaction>
</comment>
<comment type="activity regulation">
    <text evidence="1">Allosterically activated by HslU binding.</text>
</comment>
<comment type="subunit">
    <text evidence="1">A double ring-shaped homohexamer of HslV is capped on each side by a ring-shaped HslU homohexamer. The assembly of the HslU/HslV complex is dependent on binding of ATP.</text>
</comment>
<comment type="subcellular location">
    <subcellularLocation>
        <location evidence="1">Cytoplasm</location>
    </subcellularLocation>
</comment>
<comment type="similarity">
    <text evidence="1">Belongs to the peptidase T1B family. HslV subfamily.</text>
</comment>
<feature type="chain" id="PRO_1000012626" description="ATP-dependent protease subunit HslV">
    <location>
        <begin position="1"/>
        <end position="177"/>
    </location>
</feature>
<feature type="active site" evidence="1">
    <location>
        <position position="6"/>
    </location>
</feature>
<feature type="binding site" evidence="1">
    <location>
        <position position="162"/>
    </location>
    <ligand>
        <name>Na(+)</name>
        <dbReference type="ChEBI" id="CHEBI:29101"/>
    </ligand>
</feature>
<feature type="binding site" evidence="1">
    <location>
        <position position="165"/>
    </location>
    <ligand>
        <name>Na(+)</name>
        <dbReference type="ChEBI" id="CHEBI:29101"/>
    </ligand>
</feature>
<feature type="binding site" evidence="1">
    <location>
        <position position="168"/>
    </location>
    <ligand>
        <name>Na(+)</name>
        <dbReference type="ChEBI" id="CHEBI:29101"/>
    </ligand>
</feature>
<dbReference type="EC" id="3.4.25.2" evidence="1"/>
<dbReference type="EMBL" id="AM180252">
    <property type="protein sequence ID" value="CAJ54786.1"/>
    <property type="molecule type" value="Genomic_DNA"/>
</dbReference>
<dbReference type="RefSeq" id="WP_011526815.1">
    <property type="nucleotide sequence ID" value="NC_008011.1"/>
</dbReference>
<dbReference type="SMR" id="Q1MQE1"/>
<dbReference type="STRING" id="363253.LI0732"/>
<dbReference type="MEROPS" id="T01.007"/>
<dbReference type="KEGG" id="lip:LI0732"/>
<dbReference type="eggNOG" id="COG5405">
    <property type="taxonomic scope" value="Bacteria"/>
</dbReference>
<dbReference type="HOGENOM" id="CLU_093872_1_0_7"/>
<dbReference type="OrthoDB" id="9804884at2"/>
<dbReference type="Proteomes" id="UP000002430">
    <property type="component" value="Chromosome"/>
</dbReference>
<dbReference type="GO" id="GO:0009376">
    <property type="term" value="C:HslUV protease complex"/>
    <property type="evidence" value="ECO:0007669"/>
    <property type="project" value="UniProtKB-UniRule"/>
</dbReference>
<dbReference type="GO" id="GO:0005839">
    <property type="term" value="C:proteasome core complex"/>
    <property type="evidence" value="ECO:0007669"/>
    <property type="project" value="InterPro"/>
</dbReference>
<dbReference type="GO" id="GO:0046872">
    <property type="term" value="F:metal ion binding"/>
    <property type="evidence" value="ECO:0007669"/>
    <property type="project" value="UniProtKB-KW"/>
</dbReference>
<dbReference type="GO" id="GO:0004298">
    <property type="term" value="F:threonine-type endopeptidase activity"/>
    <property type="evidence" value="ECO:0007669"/>
    <property type="project" value="UniProtKB-KW"/>
</dbReference>
<dbReference type="GO" id="GO:0051603">
    <property type="term" value="P:proteolysis involved in protein catabolic process"/>
    <property type="evidence" value="ECO:0007669"/>
    <property type="project" value="InterPro"/>
</dbReference>
<dbReference type="CDD" id="cd01913">
    <property type="entry name" value="protease_HslV"/>
    <property type="match status" value="1"/>
</dbReference>
<dbReference type="Gene3D" id="3.60.20.10">
    <property type="entry name" value="Glutamine Phosphoribosylpyrophosphate, subunit 1, domain 1"/>
    <property type="match status" value="1"/>
</dbReference>
<dbReference type="HAMAP" id="MF_00248">
    <property type="entry name" value="HslV"/>
    <property type="match status" value="1"/>
</dbReference>
<dbReference type="InterPro" id="IPR022281">
    <property type="entry name" value="ATP-dep_Prtase_HsIV_su"/>
</dbReference>
<dbReference type="InterPro" id="IPR029055">
    <property type="entry name" value="Ntn_hydrolases_N"/>
</dbReference>
<dbReference type="InterPro" id="IPR001353">
    <property type="entry name" value="Proteasome_sua/b"/>
</dbReference>
<dbReference type="InterPro" id="IPR023333">
    <property type="entry name" value="Proteasome_suB-type"/>
</dbReference>
<dbReference type="NCBIfam" id="TIGR03692">
    <property type="entry name" value="ATP_dep_HslV"/>
    <property type="match status" value="1"/>
</dbReference>
<dbReference type="NCBIfam" id="NF003964">
    <property type="entry name" value="PRK05456.1"/>
    <property type="match status" value="1"/>
</dbReference>
<dbReference type="PANTHER" id="PTHR32194:SF0">
    <property type="entry name" value="ATP-DEPENDENT PROTEASE SUBUNIT HSLV"/>
    <property type="match status" value="1"/>
</dbReference>
<dbReference type="PANTHER" id="PTHR32194">
    <property type="entry name" value="METALLOPROTEASE TLDD"/>
    <property type="match status" value="1"/>
</dbReference>
<dbReference type="Pfam" id="PF00227">
    <property type="entry name" value="Proteasome"/>
    <property type="match status" value="1"/>
</dbReference>
<dbReference type="PIRSF" id="PIRSF039093">
    <property type="entry name" value="HslV"/>
    <property type="match status" value="1"/>
</dbReference>
<dbReference type="SUPFAM" id="SSF56235">
    <property type="entry name" value="N-terminal nucleophile aminohydrolases (Ntn hydrolases)"/>
    <property type="match status" value="1"/>
</dbReference>
<dbReference type="PROSITE" id="PS51476">
    <property type="entry name" value="PROTEASOME_BETA_2"/>
    <property type="match status" value="1"/>
</dbReference>
<gene>
    <name evidence="1" type="primary">hslV</name>
    <name type="ordered locus">LI0732</name>
</gene>
<protein>
    <recommendedName>
        <fullName evidence="1">ATP-dependent protease subunit HslV</fullName>
        <ecNumber evidence="1">3.4.25.2</ecNumber>
    </recommendedName>
</protein>
<organism>
    <name type="scientific">Lawsonia intracellularis (strain PHE/MN1-00)</name>
    <dbReference type="NCBI Taxonomy" id="363253"/>
    <lineage>
        <taxon>Bacteria</taxon>
        <taxon>Pseudomonadati</taxon>
        <taxon>Thermodesulfobacteriota</taxon>
        <taxon>Desulfovibrionia</taxon>
        <taxon>Desulfovibrionales</taxon>
        <taxon>Desulfovibrionaceae</taxon>
        <taxon>Lawsonia</taxon>
    </lineage>
</organism>
<reference key="1">
    <citation type="submission" date="2005-11" db="EMBL/GenBank/DDBJ databases">
        <title>The complete genome sequence of Lawsonia intracellularis: the causative agent of proliferative enteropathy.</title>
        <authorList>
            <person name="Kaur K."/>
            <person name="Zhang Q."/>
            <person name="Beckler D."/>
            <person name="Munir S."/>
            <person name="Li L."/>
            <person name="Kinsley K."/>
            <person name="Herron L."/>
            <person name="Peterson A."/>
            <person name="May B."/>
            <person name="Singh S."/>
            <person name="Gebhart C."/>
            <person name="Kapur V."/>
        </authorList>
    </citation>
    <scope>NUCLEOTIDE SEQUENCE [LARGE SCALE GENOMIC DNA]</scope>
    <source>
        <strain>PHE/MN1-00</strain>
    </source>
</reference>
<keyword id="KW-0021">Allosteric enzyme</keyword>
<keyword id="KW-0963">Cytoplasm</keyword>
<keyword id="KW-0378">Hydrolase</keyword>
<keyword id="KW-0479">Metal-binding</keyword>
<keyword id="KW-0645">Protease</keyword>
<keyword id="KW-1185">Reference proteome</keyword>
<keyword id="KW-0915">Sodium</keyword>
<keyword id="KW-0888">Threonine protease</keyword>
<name>HSLV_LAWIP</name>
<sequence>MEIRGTTILAVRHKGHVALAGDGQVTLGQSVVMKHTAKKVRRMYKNQVIAGFAGTTADAFTLFERFDNYLEETNGNLVRAAVELAKEWRKDKYLRRLEAMLLVVDKDHTFVLSGTGDVIEPDDGIAAIGSGGLYAVAAARALVAHSELSAAEIARESMRITAEICVFTNLNLTLETL</sequence>
<evidence type="ECO:0000255" key="1">
    <source>
        <dbReference type="HAMAP-Rule" id="MF_00248"/>
    </source>
</evidence>